<comment type="function">
    <text evidence="6 7 8 9 10">Magnesium-independent polyisoprenoid diphosphatase that catalyzes the sequential dephosphorylation of presqualene, farnesyl, geranyl and geranylgeranyl diphosphates (PubMed:16464866, PubMed:19220020, PubMed:20110354). Functions in the innate immune response through the dephosphorylation of presqualene diphosphate which acts as a potent inhibitor of the signaling pathways contributing to polymorphonuclear neutrophils activation (PubMed:16464866, PubMed:23568778). May regulate the biosynthesis of cholesterol and related sterols by dephosphorylating presqualene and farnesyl diphosphate, two key intermediates in this biosynthetic pathway (PubMed:20110354). May also play a role in protein prenylation by acting on farnesyl diphosphate and its derivative geranylgeranyl diphosphate, two precursors for the addition of isoprenoid anchors to membrane proteins (PubMed:20110354). Has a lower activity towards phosphatidic acid (PA), but through phosphatidic acid dephosphorylation may participate in the biosynthesis of phospholipids and triacylglycerols (PubMed:18930839). May also act on ceramide-1-P, lysophosphatidic acid (LPA) and sphing-4-enine 1-phosphate/sphingosine-1-phosphate (PubMed:18930839, PubMed:20110354).</text>
</comment>
<comment type="catalytic activity">
    <reaction evidence="6 8 9">
        <text>presqualene diphosphate + H2O = presqualene phosphate + phosphate + H(+)</text>
        <dbReference type="Rhea" id="RHEA:67968"/>
        <dbReference type="ChEBI" id="CHEBI:15377"/>
        <dbReference type="ChEBI" id="CHEBI:15378"/>
        <dbReference type="ChEBI" id="CHEBI:43474"/>
        <dbReference type="ChEBI" id="CHEBI:57310"/>
        <dbReference type="ChEBI" id="CHEBI:176803"/>
    </reaction>
    <physiologicalReaction direction="left-to-right" evidence="8">
        <dbReference type="Rhea" id="RHEA:67969"/>
    </physiologicalReaction>
</comment>
<comment type="catalytic activity">
    <reaction evidence="16">
        <text>presqualene phosphate + H2O = presqualene alcohol + phosphate</text>
        <dbReference type="Rhea" id="RHEA:68024"/>
        <dbReference type="ChEBI" id="CHEBI:15377"/>
        <dbReference type="ChEBI" id="CHEBI:43474"/>
        <dbReference type="ChEBI" id="CHEBI:176803"/>
        <dbReference type="ChEBI" id="CHEBI:176962"/>
    </reaction>
    <physiologicalReaction direction="left-to-right" evidence="16">
        <dbReference type="Rhea" id="RHEA:68025"/>
    </physiologicalReaction>
</comment>
<comment type="catalytic activity">
    <reaction evidence="8 9">
        <text>(2E,6E)-farnesyl diphosphate + H2O = (2E,6E)-farnesyl phosphate + phosphate + H(+)</text>
        <dbReference type="Rhea" id="RHEA:48128"/>
        <dbReference type="ChEBI" id="CHEBI:15377"/>
        <dbReference type="ChEBI" id="CHEBI:15378"/>
        <dbReference type="ChEBI" id="CHEBI:43474"/>
        <dbReference type="ChEBI" id="CHEBI:88226"/>
        <dbReference type="ChEBI" id="CHEBI:175763"/>
    </reaction>
    <physiologicalReaction direction="left-to-right" evidence="16">
        <dbReference type="Rhea" id="RHEA:48129"/>
    </physiologicalReaction>
</comment>
<comment type="catalytic activity">
    <reaction evidence="16">
        <text>(2E,6E)-farnesyl phosphate + H2O = (2E,6E)-farnesol + phosphate</text>
        <dbReference type="Rhea" id="RHEA:48132"/>
        <dbReference type="ChEBI" id="CHEBI:15377"/>
        <dbReference type="ChEBI" id="CHEBI:16619"/>
        <dbReference type="ChEBI" id="CHEBI:43474"/>
        <dbReference type="ChEBI" id="CHEBI:88226"/>
    </reaction>
    <physiologicalReaction direction="left-to-right" evidence="16">
        <dbReference type="Rhea" id="RHEA:48133"/>
    </physiologicalReaction>
</comment>
<comment type="catalytic activity">
    <reaction evidence="9">
        <text>(2E,6E,10E)-geranylgeranyl diphosphate + H2O = (2E,6E,10E)-geranylgeranyl phosphate + phosphate + H(+)</text>
        <dbReference type="Rhea" id="RHEA:68008"/>
        <dbReference type="ChEBI" id="CHEBI:15377"/>
        <dbReference type="ChEBI" id="CHEBI:15378"/>
        <dbReference type="ChEBI" id="CHEBI:43474"/>
        <dbReference type="ChEBI" id="CHEBI:58756"/>
        <dbReference type="ChEBI" id="CHEBI:144936"/>
    </reaction>
    <physiologicalReaction direction="left-to-right" evidence="16">
        <dbReference type="Rhea" id="RHEA:68009"/>
    </physiologicalReaction>
</comment>
<comment type="catalytic activity">
    <reaction evidence="16">
        <text>(2E,6E,10E)-geranylgeranyl phosphate + H2O = (2E,6E,10E)-geranylgeraniol + phosphate</text>
        <dbReference type="Rhea" id="RHEA:68016"/>
        <dbReference type="ChEBI" id="CHEBI:15377"/>
        <dbReference type="ChEBI" id="CHEBI:43474"/>
        <dbReference type="ChEBI" id="CHEBI:46762"/>
        <dbReference type="ChEBI" id="CHEBI:144936"/>
    </reaction>
    <physiologicalReaction direction="left-to-right" evidence="16">
        <dbReference type="Rhea" id="RHEA:68017"/>
    </physiologicalReaction>
</comment>
<comment type="catalytic activity">
    <reaction evidence="9">
        <text>(2E)-geranyl diphosphate + H2O = (2E)-geranyl phosphate + phosphate + H(+)</text>
        <dbReference type="Rhea" id="RHEA:47944"/>
        <dbReference type="ChEBI" id="CHEBI:15377"/>
        <dbReference type="ChEBI" id="CHEBI:15378"/>
        <dbReference type="ChEBI" id="CHEBI:43474"/>
        <dbReference type="ChEBI" id="CHEBI:58057"/>
        <dbReference type="ChEBI" id="CHEBI:88107"/>
        <dbReference type="EC" id="3.6.1.68"/>
    </reaction>
    <physiologicalReaction direction="left-to-right" evidence="16">
        <dbReference type="Rhea" id="RHEA:47945"/>
    </physiologicalReaction>
</comment>
<comment type="catalytic activity">
    <reaction evidence="16">
        <text>(2E)-geranyl phosphate + H2O = (2E)-geraniol + phosphate</text>
        <dbReference type="Rhea" id="RHEA:68020"/>
        <dbReference type="ChEBI" id="CHEBI:15377"/>
        <dbReference type="ChEBI" id="CHEBI:17447"/>
        <dbReference type="ChEBI" id="CHEBI:43474"/>
        <dbReference type="ChEBI" id="CHEBI:88107"/>
    </reaction>
    <physiologicalReaction direction="left-to-right" evidence="16">
        <dbReference type="Rhea" id="RHEA:68021"/>
    </physiologicalReaction>
</comment>
<comment type="catalytic activity">
    <reaction evidence="7 9">
        <text>1,2-dihexadecanoyl-sn-glycero-3-phosphate + H2O = 1,2-dihexadecanoyl-sn-glycerol + phosphate</text>
        <dbReference type="Rhea" id="RHEA:43236"/>
        <dbReference type="ChEBI" id="CHEBI:15377"/>
        <dbReference type="ChEBI" id="CHEBI:43474"/>
        <dbReference type="ChEBI" id="CHEBI:72859"/>
        <dbReference type="ChEBI" id="CHEBI:82929"/>
    </reaction>
    <physiologicalReaction direction="left-to-right" evidence="15">
        <dbReference type="Rhea" id="RHEA:43237"/>
    </physiologicalReaction>
</comment>
<comment type="activity regulation">
    <text evidence="7">Inhibited by propranolol (PubMed:18930839). Not inhibited by N-ethylmaleimide or bromoenolactome (PubMed:18930839).</text>
</comment>
<comment type="biophysicochemical properties">
    <kinetics>
        <Vmax evidence="7">44.8 nmol/min/mg enzyme with 1,2-dihexadecanoyl-sn-glycero-3-phosphate as substrate</Vmax>
    </kinetics>
    <phDependence>
        <text evidence="6">Optimum pH is 7-8.</text>
    </phDependence>
</comment>
<comment type="interaction">
    <interactant intactId="EBI-11721828">
        <id>Q8IY26</id>
    </interactant>
    <interactant intactId="EBI-19125216">
        <id>Q86WK6</id>
        <label>AMIGO1</label>
    </interactant>
    <organismsDiffer>false</organismsDiffer>
    <experiments>3</experiments>
</comment>
<comment type="interaction">
    <interactant intactId="EBI-11721828">
        <id>Q8IY26</id>
    </interactant>
    <interactant intactId="EBI-13059134">
        <id>Q13520</id>
        <label>AQP6</label>
    </interactant>
    <organismsDiffer>false</organismsDiffer>
    <experiments>3</experiments>
</comment>
<comment type="interaction">
    <interactant intactId="EBI-11721828">
        <id>Q8IY26</id>
    </interactant>
    <interactant intactId="EBI-19124986">
        <id>O94778</id>
        <label>AQP8</label>
    </interactant>
    <organismsDiffer>false</organismsDiffer>
    <experiments>3</experiments>
</comment>
<comment type="interaction">
    <interactant intactId="EBI-11721828">
        <id>Q8IY26</id>
    </interactant>
    <interactant intactId="EBI-17841208">
        <id>Q7KYR7-4</id>
        <label>BTN2A1</label>
    </interactant>
    <organismsDiffer>false</organismsDiffer>
    <experiments>3</experiments>
</comment>
<comment type="interaction">
    <interactant intactId="EBI-11721828">
        <id>Q8IY26</id>
    </interactant>
    <interactant intactId="EBI-17953245">
        <id>Q6UXG8-3</id>
        <label>BTNL9</label>
    </interactant>
    <organismsDiffer>false</organismsDiffer>
    <experiments>3</experiments>
</comment>
<comment type="interaction">
    <interactant intactId="EBI-11721828">
        <id>Q8IY26</id>
    </interactant>
    <interactant intactId="EBI-7797864">
        <id>P11912</id>
        <label>CD79A</label>
    </interactant>
    <organismsDiffer>false</organismsDiffer>
    <experiments>3</experiments>
</comment>
<comment type="interaction">
    <interactant intactId="EBI-11721828">
        <id>Q8IY26</id>
    </interactant>
    <interactant intactId="EBI-752069">
        <id>Q9H5X1</id>
        <label>CIAO2A</label>
    </interactant>
    <organismsDiffer>false</organismsDiffer>
    <experiments>3</experiments>
</comment>
<comment type="interaction">
    <interactant intactId="EBI-11721828">
        <id>Q8IY26</id>
    </interactant>
    <interactant intactId="EBI-12867518">
        <id>Q96FX9</id>
        <label>CLDN15</label>
    </interactant>
    <organismsDiffer>false</organismsDiffer>
    <experiments>3</experiments>
</comment>
<comment type="interaction">
    <interactant intactId="EBI-11721828">
        <id>Q8IY26</id>
    </interactant>
    <interactant intactId="EBI-18341636">
        <id>O95484</id>
        <label>CLDN9</label>
    </interactant>
    <organismsDiffer>false</organismsDiffer>
    <experiments>3</experiments>
</comment>
<comment type="interaction">
    <interactant intactId="EBI-11721828">
        <id>Q8IY26</id>
    </interactant>
    <interactant intactId="EBI-1391211">
        <id>Q9H2X3</id>
        <label>CLEC4M</label>
    </interactant>
    <organismsDiffer>false</organismsDiffer>
    <experiments>3</experiments>
</comment>
<comment type="interaction">
    <interactant intactId="EBI-11721828">
        <id>Q8IY26</id>
    </interactant>
    <interactant intactId="EBI-1043514">
        <id>O75503</id>
        <label>CLN5</label>
    </interactant>
    <organismsDiffer>false</organismsDiffer>
    <experiments>3</experiments>
</comment>
<comment type="interaction">
    <interactant intactId="EBI-11721828">
        <id>Q8IY26</id>
    </interactant>
    <interactant intactId="EBI-372265">
        <id>P21964</id>
        <label>COMT</label>
    </interactant>
    <organismsDiffer>false</organismsDiffer>
    <experiments>3</experiments>
</comment>
<comment type="interaction">
    <interactant intactId="EBI-11721828">
        <id>Q8IY26</id>
    </interactant>
    <interactant intactId="EBI-6942903">
        <id>Q96BA8</id>
        <label>CREB3L1</label>
    </interactant>
    <organismsDiffer>false</organismsDiffer>
    <experiments>5</experiments>
</comment>
<comment type="interaction">
    <interactant intactId="EBI-11721828">
        <id>Q8IY26</id>
    </interactant>
    <interactant intactId="EBI-3915253">
        <id>Q15125</id>
        <label>EBP</label>
    </interactant>
    <organismsDiffer>false</organismsDiffer>
    <experiments>3</experiments>
</comment>
<comment type="interaction">
    <interactant intactId="EBI-11721828">
        <id>Q8IY26</id>
    </interactant>
    <interactant intactId="EBI-18636064">
        <id>Q8TBP5</id>
        <label>FAM174A</label>
    </interactant>
    <organismsDiffer>false</organismsDiffer>
    <experiments>3</experiments>
</comment>
<comment type="interaction">
    <interactant intactId="EBI-11721828">
        <id>Q8IY26</id>
    </interactant>
    <interactant intactId="EBI-18304435">
        <id>Q5JX71</id>
        <label>FAM209A</label>
    </interactant>
    <organismsDiffer>false</organismsDiffer>
    <experiments>3</experiments>
</comment>
<comment type="interaction">
    <interactant intactId="EBI-11721828">
        <id>Q8IY26</id>
    </interactant>
    <interactant intactId="EBI-18938272">
        <id>Q96KR6</id>
        <label>FAM210B</label>
    </interactant>
    <organismsDiffer>false</organismsDiffer>
    <experiments>3</experiments>
</comment>
<comment type="interaction">
    <interactant intactId="EBI-11721828">
        <id>Q8IY26</id>
    </interactant>
    <interactant intactId="EBI-12887376">
        <id>Q96LL3</id>
        <label>FIMP</label>
    </interactant>
    <organismsDiffer>false</organismsDiffer>
    <experiments>3</experiments>
</comment>
<comment type="interaction">
    <interactant intactId="EBI-11721828">
        <id>Q8IY26</id>
    </interactant>
    <interactant intactId="EBI-3918971">
        <id>Q9Y680</id>
        <label>FKBP7</label>
    </interactant>
    <organismsDiffer>false</organismsDiffer>
    <experiments>3</experiments>
</comment>
<comment type="interaction">
    <interactant intactId="EBI-11721828">
        <id>Q8IY26</id>
    </interactant>
    <interactant intactId="EBI-12142257">
        <id>Q8TBE3</id>
        <label>FNDC9</label>
    </interactant>
    <organismsDiffer>false</organismsDiffer>
    <experiments>3</experiments>
</comment>
<comment type="interaction">
    <interactant intactId="EBI-11721828">
        <id>Q8IY26</id>
    </interactant>
    <interactant intactId="EBI-12175685">
        <id>Q14802-3</id>
        <label>FXYD3</label>
    </interactant>
    <organismsDiffer>false</organismsDiffer>
    <experiments>3</experiments>
</comment>
<comment type="interaction">
    <interactant intactId="EBI-11721828">
        <id>Q8IY26</id>
    </interactant>
    <interactant intactId="EBI-3909454">
        <id>O95377</id>
        <label>GJB5</label>
    </interactant>
    <organismsDiffer>false</organismsDiffer>
    <experiments>3</experiments>
</comment>
<comment type="interaction">
    <interactant intactId="EBI-11721828">
        <id>Q8IY26</id>
    </interactant>
    <interactant intactId="EBI-3933251">
        <id>Q9NS71</id>
        <label>GKN1</label>
    </interactant>
    <organismsDiffer>false</organismsDiffer>
    <experiments>3</experiments>
</comment>
<comment type="interaction">
    <interactant intactId="EBI-11721828">
        <id>Q8IY26</id>
    </interactant>
    <interactant intactId="EBI-3917143">
        <id>Q5T7V8</id>
        <label>GORAB</label>
    </interactant>
    <organismsDiffer>false</organismsDiffer>
    <experiments>3</experiments>
</comment>
<comment type="interaction">
    <interactant intactId="EBI-11721828">
        <id>Q8IY26</id>
    </interactant>
    <interactant intactId="EBI-11721746">
        <id>Q8TED1</id>
        <label>GPX8</label>
    </interactant>
    <organismsDiffer>false</organismsDiffer>
    <experiments>3</experiments>
</comment>
<comment type="interaction">
    <interactant intactId="EBI-11721828">
        <id>Q8IY26</id>
    </interactant>
    <interactant intactId="EBI-1031656">
        <id>Q13651</id>
        <label>IL10RA</label>
    </interactant>
    <organismsDiffer>false</organismsDiffer>
    <experiments>3</experiments>
</comment>
<comment type="interaction">
    <interactant intactId="EBI-11721828">
        <id>Q8IY26</id>
    </interactant>
    <interactant intactId="EBI-4320063">
        <id>Q14627</id>
        <label>IL13RA2</label>
    </interactant>
    <organismsDiffer>false</organismsDiffer>
    <experiments>3</experiments>
</comment>
<comment type="interaction">
    <interactant intactId="EBI-11721828">
        <id>Q8IY26</id>
    </interactant>
    <interactant intactId="EBI-749265">
        <id>Q8N6L0</id>
        <label>KASH5</label>
    </interactant>
    <organismsDiffer>false</organismsDiffer>
    <experiments>3</experiments>
</comment>
<comment type="interaction">
    <interactant intactId="EBI-11721828">
        <id>Q8IY26</id>
    </interactant>
    <interactant intactId="EBI-19944128">
        <id>Q6UX15-2</id>
        <label>LAYN</label>
    </interactant>
    <organismsDiffer>false</organismsDiffer>
    <experiments>3</experiments>
</comment>
<comment type="interaction">
    <interactant intactId="EBI-11721828">
        <id>Q8IY26</id>
    </interactant>
    <interactant intactId="EBI-10173166">
        <id>Q5T700</id>
        <label>LDLRAD1</label>
    </interactant>
    <organismsDiffer>false</organismsDiffer>
    <experiments>3</experiments>
</comment>
<comment type="interaction">
    <interactant intactId="EBI-11721828">
        <id>Q8IY26</id>
    </interactant>
    <interactant intactId="EBI-6163737">
        <id>Q8N4V1</id>
        <label>MMGT1</label>
    </interactant>
    <organismsDiffer>false</organismsDiffer>
    <experiments>3</experiments>
</comment>
<comment type="interaction">
    <interactant intactId="EBI-11721828">
        <id>Q8IY26</id>
    </interactant>
    <interactant intactId="EBI-12806656">
        <id>Q96HJ5</id>
        <label>MS4A3</label>
    </interactant>
    <organismsDiffer>false</organismsDiffer>
    <experiments>3</experiments>
</comment>
<comment type="interaction">
    <interactant intactId="EBI-11721828">
        <id>Q8IY26</id>
    </interactant>
    <interactant intactId="EBI-17263240">
        <id>P15941-11</id>
        <label>MUC1</label>
    </interactant>
    <organismsDiffer>false</organismsDiffer>
    <experiments>3</experiments>
</comment>
<comment type="interaction">
    <interactant intactId="EBI-11721828">
        <id>Q8IY26</id>
    </interactant>
    <interactant intactId="EBI-14061804">
        <id>Q68D85</id>
        <label>NCR3LG1</label>
    </interactant>
    <organismsDiffer>false</organismsDiffer>
    <experiments>3</experiments>
</comment>
<comment type="interaction">
    <interactant intactId="EBI-11721828">
        <id>Q8IY26</id>
    </interactant>
    <interactant intactId="EBI-13380852">
        <id>P16234-2</id>
        <label>PDGFRA</label>
    </interactant>
    <organismsDiffer>false</organismsDiffer>
    <experiments>3</experiments>
</comment>
<comment type="interaction">
    <interactant intactId="EBI-11721828">
        <id>Q8IY26</id>
    </interactant>
    <interactant intactId="EBI-716063">
        <id>Q13113</id>
        <label>PDZK1IP1</label>
    </interactant>
    <organismsDiffer>false</organismsDiffer>
    <experiments>3</experiments>
</comment>
<comment type="interaction">
    <interactant intactId="EBI-11721828">
        <id>Q8IY26</id>
    </interactant>
    <interactant intactId="EBI-717068">
        <id>Q96KR7</id>
        <label>PHACTR3</label>
    </interactant>
    <organismsDiffer>false</organismsDiffer>
    <experiments>3</experiments>
</comment>
<comment type="interaction">
    <interactant intactId="EBI-11721828">
        <id>Q8IY26</id>
    </interactant>
    <interactant intactId="EBI-476182">
        <id>P16471</id>
        <label>PRLR</label>
    </interactant>
    <organismsDiffer>false</organismsDiffer>
    <experiments>3</experiments>
</comment>
<comment type="interaction">
    <interactant intactId="EBI-11721828">
        <id>Q8IY26</id>
    </interactant>
    <interactant intactId="EBI-3919694">
        <id>P15151</id>
        <label>PVR</label>
    </interactant>
    <organismsDiffer>false</organismsDiffer>
    <experiments>3</experiments>
</comment>
<comment type="interaction">
    <interactant intactId="EBI-11721828">
        <id>Q8IY26</id>
    </interactant>
    <interactant intactId="EBI-10192441">
        <id>Q86VR2</id>
        <label>RETREG3</label>
    </interactant>
    <organismsDiffer>false</organismsDiffer>
    <experiments>3</experiments>
</comment>
<comment type="interaction">
    <interactant intactId="EBI-11721828">
        <id>Q8IY26</id>
    </interactant>
    <interactant intactId="EBI-12055631">
        <id>Q96K19-5</id>
        <label>RNF170</label>
    </interactant>
    <organismsDiffer>false</organismsDiffer>
    <experiments>3</experiments>
</comment>
<comment type="interaction">
    <interactant intactId="EBI-11721828">
        <id>Q8IY26</id>
    </interactant>
    <interactant intactId="EBI-348482">
        <id>Q99942</id>
        <label>RNF5</label>
    </interactant>
    <organismsDiffer>false</organismsDiffer>
    <experiments>3</experiments>
</comment>
<comment type="interaction">
    <interactant intactId="EBI-11721828">
        <id>Q8IY26</id>
    </interactant>
    <interactant intactId="EBI-2855401">
        <id>Q9BY50</id>
        <label>SEC11C</label>
    </interactant>
    <organismsDiffer>false</organismsDiffer>
    <experiments>3</experiments>
</comment>
<comment type="interaction">
    <interactant intactId="EBI-11721828">
        <id>Q8IY26</id>
    </interactant>
    <interactant intactId="EBI-18037857">
        <id>Q3SXP7</id>
        <label>SHISAL1</label>
    </interactant>
    <organismsDiffer>false</organismsDiffer>
    <experiments>3</experiments>
</comment>
<comment type="interaction">
    <interactant intactId="EBI-11721828">
        <id>Q8IY26</id>
    </interactant>
    <interactant intactId="EBI-17640454">
        <id>Q96PQ1</id>
        <label>SIGLEC12</label>
    </interactant>
    <organismsDiffer>false</organismsDiffer>
    <experiments>3</experiments>
</comment>
<comment type="interaction">
    <interactant intactId="EBI-11721828">
        <id>Q8IY26</id>
    </interactant>
    <interactant intactId="EBI-5235586">
        <id>Q8TBB6</id>
        <label>SLC7A14</label>
    </interactant>
    <organismsDiffer>false</organismsDiffer>
    <experiments>3</experiments>
</comment>
<comment type="interaction">
    <interactant intactId="EBI-11721828">
        <id>Q8IY26</id>
    </interactant>
    <interactant intactId="EBI-10226799">
        <id>Q0VAQ4</id>
        <label>SMAGP</label>
    </interactant>
    <organismsDiffer>false</organismsDiffer>
    <experiments>3</experiments>
</comment>
<comment type="interaction">
    <interactant intactId="EBI-11721828">
        <id>Q8IY26</id>
    </interactant>
    <interactant intactId="EBI-17280858">
        <id>Q8WWF3</id>
        <label>SSMEM1</label>
    </interactant>
    <organismsDiffer>false</organismsDiffer>
    <experiments>3</experiments>
</comment>
<comment type="interaction">
    <interactant intactId="EBI-11721828">
        <id>Q8IY26</id>
    </interactant>
    <interactant intactId="EBI-712466">
        <id>Q16623</id>
        <label>STX1A</label>
    </interactant>
    <organismsDiffer>false</organismsDiffer>
    <experiments>3</experiments>
</comment>
<comment type="interaction">
    <interactant intactId="EBI-11721828">
        <id>Q8IY26</id>
    </interactant>
    <interactant intactId="EBI-12099160">
        <id>Q8N205-2</id>
        <label>SYNE4</label>
    </interactant>
    <organismsDiffer>false</organismsDiffer>
    <experiments>3</experiments>
</comment>
<comment type="interaction">
    <interactant intactId="EBI-11721828">
        <id>Q8IY26</id>
    </interactant>
    <interactant intactId="EBI-10273251">
        <id>Q8TBG9</id>
        <label>SYNPR</label>
    </interactant>
    <organismsDiffer>false</organismsDiffer>
    <experiments>3</experiments>
</comment>
<comment type="interaction">
    <interactant intactId="EBI-11721828">
        <id>Q8IY26</id>
    </interactant>
    <interactant intactId="EBI-2821497">
        <id>Q9BVX2</id>
        <label>TMEM106C</label>
    </interactant>
    <organismsDiffer>false</organismsDiffer>
    <experiments>3</experiments>
</comment>
<comment type="interaction">
    <interactant intactId="EBI-11721828">
        <id>Q8IY26</id>
    </interactant>
    <interactant intactId="EBI-1044859">
        <id>Q9UBN6</id>
        <label>TNFRSF10D</label>
    </interactant>
    <organismsDiffer>false</organismsDiffer>
    <experiments>3</experiments>
</comment>
<comment type="interaction">
    <interactant intactId="EBI-11721828">
        <id>Q8IY26</id>
    </interactant>
    <interactant intactId="EBI-744988">
        <id>Q9H7M9</id>
        <label>VSIR</label>
    </interactant>
    <organismsDiffer>false</organismsDiffer>
    <experiments>3</experiments>
</comment>
<comment type="subcellular location">
    <subcellularLocation>
        <location evidence="6 7 9">Endoplasmic reticulum membrane</location>
        <topology evidence="16">Multi-pass membrane protein</topology>
    </subcellularLocation>
    <subcellularLocation>
        <location evidence="7">Nucleus envelope</location>
    </subcellularLocation>
    <subcellularLocation>
        <location evidence="16">Nucleus inner membrane</location>
    </subcellularLocation>
</comment>
<comment type="tissue specificity">
    <text evidence="6">Widely expressed. Expressed in most organs, in particular gastrointestinal organs, spleen, placenta, kidney, thymus and brain.</text>
</comment>
<comment type="PTM">
    <text evidence="8 10">Phosphorylation by PKC activates the phosphatase activity towards presqualene diphosphate.</text>
</comment>
<comment type="similarity">
    <text evidence="14">Belongs to the PA-phosphatase related phosphoesterase family.</text>
</comment>
<comment type="sequence caution" evidence="14">
    <conflict type="frameshift">
        <sequence resource="EMBL" id="AK074672"/>
    </conflict>
</comment>
<proteinExistence type="evidence at protein level"/>
<dbReference type="EC" id="3.1.3.-" evidence="7 9"/>
<dbReference type="EC" id="3.6.1.-" evidence="6 8 9"/>
<dbReference type="EC" id="3.6.1.68" evidence="9"/>
<dbReference type="EMBL" id="AK074672">
    <property type="status" value="NOT_ANNOTATED_CDS"/>
    <property type="molecule type" value="mRNA"/>
</dbReference>
<dbReference type="EMBL" id="AK128369">
    <property type="protein sequence ID" value="BAG54667.1"/>
    <property type="molecule type" value="mRNA"/>
</dbReference>
<dbReference type="EMBL" id="AL136231">
    <property type="status" value="NOT_ANNOTATED_CDS"/>
    <property type="molecule type" value="Genomic_DNA"/>
</dbReference>
<dbReference type="EMBL" id="BC038108">
    <property type="protein sequence ID" value="AAH38108.2"/>
    <property type="molecule type" value="mRNA"/>
</dbReference>
<dbReference type="CCDS" id="CCDS34981.1"/>
<dbReference type="RefSeq" id="NP_982278.3">
    <property type="nucleotide sequence ID" value="NM_203453.5"/>
</dbReference>
<dbReference type="SMR" id="Q8IY26"/>
<dbReference type="BioGRID" id="135624">
    <property type="interactions" value="74"/>
</dbReference>
<dbReference type="FunCoup" id="Q8IY26">
    <property type="interactions" value="679"/>
</dbReference>
<dbReference type="IntAct" id="Q8IY26">
    <property type="interactions" value="68"/>
</dbReference>
<dbReference type="MINT" id="Q8IY26"/>
<dbReference type="STRING" id="9606.ENSP00000371307"/>
<dbReference type="DEPOD" id="PLPP6"/>
<dbReference type="GlyGen" id="Q8IY26">
    <property type="glycosylation" value="1 site"/>
</dbReference>
<dbReference type="iPTMnet" id="Q8IY26"/>
<dbReference type="PhosphoSitePlus" id="Q8IY26"/>
<dbReference type="SwissPalm" id="Q8IY26"/>
<dbReference type="BioMuta" id="PLPP6"/>
<dbReference type="DMDM" id="108860900"/>
<dbReference type="jPOST" id="Q8IY26"/>
<dbReference type="MassIVE" id="Q8IY26"/>
<dbReference type="PaxDb" id="9606-ENSP00000371307"/>
<dbReference type="PeptideAtlas" id="Q8IY26"/>
<dbReference type="ProteomicsDB" id="71092"/>
<dbReference type="Pumba" id="Q8IY26"/>
<dbReference type="Antibodypedia" id="3112">
    <property type="antibodies" value="131 antibodies from 27 providers"/>
</dbReference>
<dbReference type="DNASU" id="403313"/>
<dbReference type="Ensembl" id="ENST00000381883.5">
    <property type="protein sequence ID" value="ENSP00000371307.2"/>
    <property type="gene ID" value="ENSG00000205808.7"/>
</dbReference>
<dbReference type="GeneID" id="403313"/>
<dbReference type="KEGG" id="hsa:403313"/>
<dbReference type="MANE-Select" id="ENST00000381883.5">
    <property type="protein sequence ID" value="ENSP00000371307.2"/>
    <property type="RefSeq nucleotide sequence ID" value="NM_203453.5"/>
    <property type="RefSeq protein sequence ID" value="NP_982278.3"/>
</dbReference>
<dbReference type="UCSC" id="uc003zin.5">
    <property type="organism name" value="human"/>
</dbReference>
<dbReference type="AGR" id="HGNC:23682"/>
<dbReference type="CTD" id="403313"/>
<dbReference type="DisGeNET" id="403313"/>
<dbReference type="GeneCards" id="PLPP6"/>
<dbReference type="HGNC" id="HGNC:23682">
    <property type="gene designation" value="PLPP6"/>
</dbReference>
<dbReference type="HPA" id="ENSG00000205808">
    <property type="expression patterns" value="Low tissue specificity"/>
</dbReference>
<dbReference type="MalaCards" id="PLPP6"/>
<dbReference type="MIM" id="611666">
    <property type="type" value="gene"/>
</dbReference>
<dbReference type="neXtProt" id="NX_Q8IY26"/>
<dbReference type="OpenTargets" id="ENSG00000205808"/>
<dbReference type="PharmGKB" id="PA142671155"/>
<dbReference type="VEuPathDB" id="HostDB:ENSG00000205808"/>
<dbReference type="eggNOG" id="KOG4268">
    <property type="taxonomic scope" value="Eukaryota"/>
</dbReference>
<dbReference type="GeneTree" id="ENSGT00940000160907"/>
<dbReference type="HOGENOM" id="CLU_072573_4_0_1"/>
<dbReference type="InParanoid" id="Q8IY26"/>
<dbReference type="OMA" id="GTVYCLY"/>
<dbReference type="OrthoDB" id="10266771at2759"/>
<dbReference type="PAN-GO" id="Q8IY26">
    <property type="GO annotations" value="3 GO annotations based on evolutionary models"/>
</dbReference>
<dbReference type="PhylomeDB" id="Q8IY26"/>
<dbReference type="TreeFam" id="TF323272"/>
<dbReference type="PathwayCommons" id="Q8IY26"/>
<dbReference type="Reactome" id="R-HSA-191273">
    <property type="pathway name" value="Cholesterol biosynthesis"/>
</dbReference>
<dbReference type="SignaLink" id="Q8IY26"/>
<dbReference type="BioGRID-ORCS" id="403313">
    <property type="hits" value="9 hits in 1151 CRISPR screens"/>
</dbReference>
<dbReference type="ChiTaRS" id="PLPP6">
    <property type="organism name" value="human"/>
</dbReference>
<dbReference type="GenomeRNAi" id="403313"/>
<dbReference type="Pharos" id="Q8IY26">
    <property type="development level" value="Tbio"/>
</dbReference>
<dbReference type="PRO" id="PR:Q8IY26"/>
<dbReference type="Proteomes" id="UP000005640">
    <property type="component" value="Chromosome 9"/>
</dbReference>
<dbReference type="RNAct" id="Q8IY26">
    <property type="molecule type" value="protein"/>
</dbReference>
<dbReference type="Bgee" id="ENSG00000205808">
    <property type="expression patterns" value="Expressed in secondary oocyte and 158 other cell types or tissues"/>
</dbReference>
<dbReference type="GO" id="GO:0005789">
    <property type="term" value="C:endoplasmic reticulum membrane"/>
    <property type="evidence" value="ECO:0000314"/>
    <property type="project" value="UniProtKB"/>
</dbReference>
<dbReference type="GO" id="GO:0016020">
    <property type="term" value="C:membrane"/>
    <property type="evidence" value="ECO:0000318"/>
    <property type="project" value="GO_Central"/>
</dbReference>
<dbReference type="GO" id="GO:0005637">
    <property type="term" value="C:nuclear inner membrane"/>
    <property type="evidence" value="ECO:0007669"/>
    <property type="project" value="UniProtKB-SubCell"/>
</dbReference>
<dbReference type="GO" id="GO:0031965">
    <property type="term" value="C:nuclear membrane"/>
    <property type="evidence" value="ECO:0000314"/>
    <property type="project" value="UniProtKB"/>
</dbReference>
<dbReference type="GO" id="GO:0005886">
    <property type="term" value="C:plasma membrane"/>
    <property type="evidence" value="ECO:0000304"/>
    <property type="project" value="Reactome"/>
</dbReference>
<dbReference type="GO" id="GO:0016787">
    <property type="term" value="F:hydrolase activity"/>
    <property type="evidence" value="ECO:0000304"/>
    <property type="project" value="Reactome"/>
</dbReference>
<dbReference type="GO" id="GO:0106405">
    <property type="term" value="F:isoprenoid diphosphate phosphatase activity"/>
    <property type="evidence" value="ECO:0000314"/>
    <property type="project" value="UniProtKB"/>
</dbReference>
<dbReference type="GO" id="GO:0042577">
    <property type="term" value="F:lipid phosphatase activity"/>
    <property type="evidence" value="ECO:0000314"/>
    <property type="project" value="UniProtKB"/>
</dbReference>
<dbReference type="GO" id="GO:0016829">
    <property type="term" value="F:lyase activity"/>
    <property type="evidence" value="ECO:0007669"/>
    <property type="project" value="UniProtKB-KW"/>
</dbReference>
<dbReference type="GO" id="GO:0052642">
    <property type="term" value="F:lysophosphatidic acid phosphatase activity"/>
    <property type="evidence" value="ECO:0000314"/>
    <property type="project" value="UniProtKB"/>
</dbReference>
<dbReference type="GO" id="GO:0008195">
    <property type="term" value="F:phosphatidate phosphatase activity"/>
    <property type="evidence" value="ECO:0000314"/>
    <property type="project" value="UniProtKB"/>
</dbReference>
<dbReference type="GO" id="GO:0042392">
    <property type="term" value="F:sphingosine-1-phosphate phosphatase activity"/>
    <property type="evidence" value="ECO:0000314"/>
    <property type="project" value="UniProtKB"/>
</dbReference>
<dbReference type="GO" id="GO:0006695">
    <property type="term" value="P:cholesterol biosynthetic process"/>
    <property type="evidence" value="ECO:0000304"/>
    <property type="project" value="Reactome"/>
</dbReference>
<dbReference type="GO" id="GO:0045339">
    <property type="term" value="P:farnesyl diphosphate catabolic process"/>
    <property type="evidence" value="ECO:0000314"/>
    <property type="project" value="UniProtKB"/>
</dbReference>
<dbReference type="GO" id="GO:0033383">
    <property type="term" value="P:geranyl diphosphate metabolic process"/>
    <property type="evidence" value="ECO:0000314"/>
    <property type="project" value="UniProtKB"/>
</dbReference>
<dbReference type="GO" id="GO:1902247">
    <property type="term" value="P:geranylgeranyl diphosphate catabolic process"/>
    <property type="evidence" value="ECO:0000314"/>
    <property type="project" value="UniProtKB"/>
</dbReference>
<dbReference type="GO" id="GO:0045087">
    <property type="term" value="P:innate immune response"/>
    <property type="evidence" value="ECO:0007669"/>
    <property type="project" value="UniProtKB-KW"/>
</dbReference>
<dbReference type="GO" id="GO:0006720">
    <property type="term" value="P:isoprenoid metabolic process"/>
    <property type="evidence" value="ECO:0000314"/>
    <property type="project" value="UniProtKB"/>
</dbReference>
<dbReference type="GO" id="GO:0046839">
    <property type="term" value="P:phospholipid dephosphorylation"/>
    <property type="evidence" value="ECO:0000314"/>
    <property type="project" value="UniProtKB"/>
</dbReference>
<dbReference type="GO" id="GO:1902565">
    <property type="term" value="P:positive regulation of neutrophil activation"/>
    <property type="evidence" value="ECO:0000315"/>
    <property type="project" value="UniProtKB"/>
</dbReference>
<dbReference type="GO" id="GO:0018342">
    <property type="term" value="P:protein prenylation"/>
    <property type="evidence" value="ECO:0000315"/>
    <property type="project" value="UniProtKB"/>
</dbReference>
<dbReference type="CDD" id="cd03391">
    <property type="entry name" value="PAP2_containing_2_like"/>
    <property type="match status" value="1"/>
</dbReference>
<dbReference type="FunFam" id="1.20.144.10:FF:000020">
    <property type="entry name" value="phospholipid phosphatase 6"/>
    <property type="match status" value="1"/>
</dbReference>
<dbReference type="Gene3D" id="1.20.144.10">
    <property type="entry name" value="Phosphatidic acid phosphatase type 2/haloperoxidase"/>
    <property type="match status" value="1"/>
</dbReference>
<dbReference type="InterPro" id="IPR036938">
    <property type="entry name" value="P_Acid_Pase_2/haloperoxi_sf"/>
</dbReference>
<dbReference type="InterPro" id="IPR000326">
    <property type="entry name" value="P_Acid_Pase_2/haloperoxidase"/>
</dbReference>
<dbReference type="PANTHER" id="PTHR14969:SF18">
    <property type="entry name" value="POLYISOPRENOID DIPHOSPHATE_PHOSPHATE PHOSPHOHYDROLASE PLPP6"/>
    <property type="match status" value="1"/>
</dbReference>
<dbReference type="PANTHER" id="PTHR14969">
    <property type="entry name" value="SPHINGOSINE-1-PHOSPHATE PHOSPHOHYDROLASE"/>
    <property type="match status" value="1"/>
</dbReference>
<dbReference type="Pfam" id="PF01569">
    <property type="entry name" value="PAP2"/>
    <property type="match status" value="1"/>
</dbReference>
<dbReference type="SMART" id="SM00014">
    <property type="entry name" value="acidPPc"/>
    <property type="match status" value="1"/>
</dbReference>
<dbReference type="SUPFAM" id="SSF48317">
    <property type="entry name" value="Acid phosphatase/Vanadium-dependent haloperoxidase"/>
    <property type="match status" value="1"/>
</dbReference>
<name>PLPP6_HUMAN</name>
<gene>
    <name evidence="17" type="primary">PLPP6</name>
    <name evidence="13" type="synonym">PDP1</name>
    <name evidence="11 17" type="synonym">PPAPDC2</name>
</gene>
<feature type="chain" id="PRO_0000239396" description="Polyisoprenoid diphosphate/phosphate phosphohydrolase PLPP6">
    <location>
        <begin position="1"/>
        <end position="295"/>
    </location>
</feature>
<feature type="topological domain" description="Cytoplasmic" evidence="16">
    <location>
        <begin position="1"/>
        <end position="132"/>
    </location>
</feature>
<feature type="transmembrane region" description="Helical" evidence="3">
    <location>
        <begin position="133"/>
        <end position="153"/>
    </location>
</feature>
<feature type="topological domain" description="Lumenal" evidence="16">
    <location>
        <begin position="154"/>
        <end position="164"/>
    </location>
</feature>
<feature type="transmembrane region" description="Helical" evidence="3">
    <location>
        <begin position="165"/>
        <end position="185"/>
    </location>
</feature>
<feature type="topological domain" description="Cytoplasmic" evidence="16">
    <location>
        <begin position="186"/>
        <end position="228"/>
    </location>
</feature>
<feature type="transmembrane region" description="Helical" evidence="3">
    <location>
        <begin position="229"/>
        <end position="249"/>
    </location>
</feature>
<feature type="topological domain" description="Lumenal" evidence="16">
    <location>
        <begin position="250"/>
        <end position="260"/>
    </location>
</feature>
<feature type="transmembrane region" description="Helical" evidence="3">
    <location>
        <begin position="261"/>
        <end position="281"/>
    </location>
</feature>
<feature type="topological domain" description="Cytoplasmic" evidence="16">
    <location>
        <begin position="282"/>
        <end position="295"/>
    </location>
</feature>
<feature type="region of interest" description="Disordered" evidence="4">
    <location>
        <begin position="1"/>
        <end position="39"/>
    </location>
</feature>
<feature type="region of interest" description="Disordered" evidence="4">
    <location>
        <begin position="61"/>
        <end position="90"/>
    </location>
</feature>
<feature type="region of interest" description="Phosphatase sequence motif I" evidence="16">
    <location>
        <begin position="184"/>
        <end position="192"/>
    </location>
</feature>
<feature type="region of interest" description="Phosphatase sequence motif II" evidence="16">
    <location>
        <begin position="211"/>
        <end position="214"/>
    </location>
</feature>
<feature type="region of interest" description="Phosphatase sequence motif III" evidence="16">
    <location>
        <begin position="249"/>
        <end position="260"/>
    </location>
</feature>
<feature type="compositionally biased region" description="Low complexity" evidence="4">
    <location>
        <begin position="16"/>
        <end position="27"/>
    </location>
</feature>
<feature type="active site" description="Proton donors" evidence="1">
    <location>
        <position position="214"/>
    </location>
</feature>
<feature type="active site" description="Nucleophile" evidence="1 16">
    <location>
        <position position="256"/>
    </location>
</feature>
<feature type="site" description="Stabilizes the active site histidine for nucleophilic attack" evidence="1">
    <location>
        <position position="260"/>
    </location>
</feature>
<feature type="modified residue" description="Phosphoserine" evidence="18">
    <location>
        <position position="26"/>
    </location>
</feature>
<feature type="modified residue" description="Phosphoserine" evidence="18">
    <location>
        <position position="36"/>
    </location>
</feature>
<feature type="modified residue" description="Phosphoserine" evidence="2">
    <location>
        <position position="70"/>
    </location>
</feature>
<feature type="sequence variant" id="VAR_050616" description="In dbSNP:rs34250374.">
    <original>S</original>
    <variation>G</variation>
    <location>
        <position position="7"/>
    </location>
</feature>
<feature type="sequence variant" id="VAR_050617" description="In dbSNP:rs35791393.">
    <original>M</original>
    <variation>T</variation>
    <location>
        <position position="8"/>
    </location>
</feature>
<feature type="sequence variant" id="VAR_026645" description="In dbSNP:rs17857157." evidence="5">
    <original>S</original>
    <variation>W</variation>
    <location>
        <position position="140"/>
    </location>
</feature>
<feature type="mutagenesis site" description="Loss of polyisoprenoid diphosphate phosphatase activity." evidence="9">
    <original>K</original>
    <variation>R</variation>
    <location>
        <position position="184"/>
    </location>
</feature>
<feature type="mutagenesis site" description="Loss of polyisoprenoid diphosphate phosphatase activity." evidence="9">
    <original>S</original>
    <variation>T</variation>
    <location>
        <position position="212"/>
    </location>
</feature>
<feature type="mutagenesis site" description="Loss of polyisoprenoid diphosphate phosphatase activity." evidence="9">
    <original>H</original>
    <variation>A</variation>
    <location>
        <position position="256"/>
    </location>
</feature>
<organism>
    <name type="scientific">Homo sapiens</name>
    <name type="common">Human</name>
    <dbReference type="NCBI Taxonomy" id="9606"/>
    <lineage>
        <taxon>Eukaryota</taxon>
        <taxon>Metazoa</taxon>
        <taxon>Chordata</taxon>
        <taxon>Craniata</taxon>
        <taxon>Vertebrata</taxon>
        <taxon>Euteleostomi</taxon>
        <taxon>Mammalia</taxon>
        <taxon>Eutheria</taxon>
        <taxon>Euarchontoglires</taxon>
        <taxon>Primates</taxon>
        <taxon>Haplorrhini</taxon>
        <taxon>Catarrhini</taxon>
        <taxon>Hominidae</taxon>
        <taxon>Homo</taxon>
    </lineage>
</organism>
<sequence length="295" mass="32194">MPSPRRSMEGRPLGVSASSSSSSPGSPAHGGGGGGSRFEFQSLLSSRATAVDPTCARLRASESPVHRRGSFPLAAAGPSQSPAPPLPEEDRMDLNPSFLGIALRSLLAIDLWLSKKLGVCAGESSSWGSVRPLMKLLEISGHGIPWLLGTLYCLCRSDSWAGREVLMNLLFALLLDLLLVALIKGLVRRRRPAHNQMDMFVTLSVDKYSFPSGHATRAALMSRFILNHLVLAIPLRVLVVLWAFVLGLSRVMLGRHNVTDVAFGFFLGYMQYSIVDYCWLSPHNAPVLFLLWSQR</sequence>
<protein>
    <recommendedName>
        <fullName evidence="16">Polyisoprenoid diphosphate/phosphate phosphohydrolase PLPP6</fullName>
        <ecNumber evidence="7 9">3.1.3.-</ecNumber>
        <ecNumber evidence="6 8 9">3.6.1.-</ecNumber>
        <ecNumber evidence="9">3.6.1.68</ecNumber>
    </recommendedName>
    <alternativeName>
        <fullName evidence="12">Lipid phosphatase-related protein-B</fullName>
        <shortName evidence="12">LPRP-B</shortName>
    </alternativeName>
    <alternativeName>
        <fullName evidence="12">PA-PSP</fullName>
    </alternativeName>
    <alternativeName>
        <fullName evidence="11 17">Phosphatidic acid phosphatase type 2 domain-containing protein 2</fullName>
        <shortName evidence="11">PPAP2 domain-containing protein 2</shortName>
    </alternativeName>
    <alternativeName>
        <fullName evidence="17">Phospholipid phosphatase 6</fullName>
    </alternativeName>
    <alternativeName>
        <fullName evidence="11">Presqualene diphosphate phosphatase</fullName>
    </alternativeName>
    <alternativeName>
        <fullName evidence="13">Type 1 polyisoprenoid diphosphate phosphatase</fullName>
    </alternativeName>
</protein>
<evidence type="ECO:0000250" key="1">
    <source>
        <dbReference type="UniProtKB" id="O34349"/>
    </source>
</evidence>
<evidence type="ECO:0000250" key="2">
    <source>
        <dbReference type="UniProtKB" id="Q9D4F2"/>
    </source>
</evidence>
<evidence type="ECO:0000255" key="3"/>
<evidence type="ECO:0000256" key="4">
    <source>
        <dbReference type="SAM" id="MobiDB-lite"/>
    </source>
</evidence>
<evidence type="ECO:0000269" key="5">
    <source>
    </source>
</evidence>
<evidence type="ECO:0000269" key="6">
    <source>
    </source>
</evidence>
<evidence type="ECO:0000269" key="7">
    <source>
    </source>
</evidence>
<evidence type="ECO:0000269" key="8">
    <source>
    </source>
</evidence>
<evidence type="ECO:0000269" key="9">
    <source>
    </source>
</evidence>
<evidence type="ECO:0000269" key="10">
    <source>
    </source>
</evidence>
<evidence type="ECO:0000303" key="11">
    <source>
    </source>
</evidence>
<evidence type="ECO:0000303" key="12">
    <source>
    </source>
</evidence>
<evidence type="ECO:0000303" key="13">
    <source>
    </source>
</evidence>
<evidence type="ECO:0000305" key="14"/>
<evidence type="ECO:0000305" key="15">
    <source>
    </source>
</evidence>
<evidence type="ECO:0000305" key="16">
    <source>
    </source>
</evidence>
<evidence type="ECO:0000312" key="17">
    <source>
        <dbReference type="HGNC" id="HGNC:23682"/>
    </source>
</evidence>
<evidence type="ECO:0007744" key="18">
    <source>
    </source>
</evidence>
<keyword id="KW-0903">Direct protein sequencing</keyword>
<keyword id="KW-0256">Endoplasmic reticulum</keyword>
<keyword id="KW-0378">Hydrolase</keyword>
<keyword id="KW-0391">Immunity</keyword>
<keyword id="KW-0399">Innate immunity</keyword>
<keyword id="KW-0443">Lipid metabolism</keyword>
<keyword id="KW-0456">Lyase</keyword>
<keyword id="KW-0472">Membrane</keyword>
<keyword id="KW-0539">Nucleus</keyword>
<keyword id="KW-0597">Phosphoprotein</keyword>
<keyword id="KW-1267">Proteomics identification</keyword>
<keyword id="KW-1185">Reference proteome</keyword>
<keyword id="KW-0812">Transmembrane</keyword>
<keyword id="KW-1133">Transmembrane helix</keyword>
<accession>Q8IY26</accession>
<accession>B3KY05</accession>
<accession>Q5JVJ6</accession>
<accession>Q8NCK9</accession>
<reference key="1">
    <citation type="journal article" date="2004" name="Nat. Genet.">
        <title>Complete sequencing and characterization of 21,243 full-length human cDNAs.</title>
        <authorList>
            <person name="Ota T."/>
            <person name="Suzuki Y."/>
            <person name="Nishikawa T."/>
            <person name="Otsuki T."/>
            <person name="Sugiyama T."/>
            <person name="Irie R."/>
            <person name="Wakamatsu A."/>
            <person name="Hayashi K."/>
            <person name="Sato H."/>
            <person name="Nagai K."/>
            <person name="Kimura K."/>
            <person name="Makita H."/>
            <person name="Sekine M."/>
            <person name="Obayashi M."/>
            <person name="Nishi T."/>
            <person name="Shibahara T."/>
            <person name="Tanaka T."/>
            <person name="Ishii S."/>
            <person name="Yamamoto J."/>
            <person name="Saito K."/>
            <person name="Kawai Y."/>
            <person name="Isono Y."/>
            <person name="Nakamura Y."/>
            <person name="Nagahari K."/>
            <person name="Murakami K."/>
            <person name="Yasuda T."/>
            <person name="Iwayanagi T."/>
            <person name="Wagatsuma M."/>
            <person name="Shiratori A."/>
            <person name="Sudo H."/>
            <person name="Hosoiri T."/>
            <person name="Kaku Y."/>
            <person name="Kodaira H."/>
            <person name="Kondo H."/>
            <person name="Sugawara M."/>
            <person name="Takahashi M."/>
            <person name="Kanda K."/>
            <person name="Yokoi T."/>
            <person name="Furuya T."/>
            <person name="Kikkawa E."/>
            <person name="Omura Y."/>
            <person name="Abe K."/>
            <person name="Kamihara K."/>
            <person name="Katsuta N."/>
            <person name="Sato K."/>
            <person name="Tanikawa M."/>
            <person name="Yamazaki M."/>
            <person name="Ninomiya K."/>
            <person name="Ishibashi T."/>
            <person name="Yamashita H."/>
            <person name="Murakawa K."/>
            <person name="Fujimori K."/>
            <person name="Tanai H."/>
            <person name="Kimata M."/>
            <person name="Watanabe M."/>
            <person name="Hiraoka S."/>
            <person name="Chiba Y."/>
            <person name="Ishida S."/>
            <person name="Ono Y."/>
            <person name="Takiguchi S."/>
            <person name="Watanabe S."/>
            <person name="Yosida M."/>
            <person name="Hotuta T."/>
            <person name="Kusano J."/>
            <person name="Kanehori K."/>
            <person name="Takahashi-Fujii A."/>
            <person name="Hara H."/>
            <person name="Tanase T.-O."/>
            <person name="Nomura Y."/>
            <person name="Togiya S."/>
            <person name="Komai F."/>
            <person name="Hara R."/>
            <person name="Takeuchi K."/>
            <person name="Arita M."/>
            <person name="Imose N."/>
            <person name="Musashino K."/>
            <person name="Yuuki H."/>
            <person name="Oshima A."/>
            <person name="Sasaki N."/>
            <person name="Aotsuka S."/>
            <person name="Yoshikawa Y."/>
            <person name="Matsunawa H."/>
            <person name="Ichihara T."/>
            <person name="Shiohata N."/>
            <person name="Sano S."/>
            <person name="Moriya S."/>
            <person name="Momiyama H."/>
            <person name="Satoh N."/>
            <person name="Takami S."/>
            <person name="Terashima Y."/>
            <person name="Suzuki O."/>
            <person name="Nakagawa S."/>
            <person name="Senoh A."/>
            <person name="Mizoguchi H."/>
            <person name="Goto Y."/>
            <person name="Shimizu F."/>
            <person name="Wakebe H."/>
            <person name="Hishigaki H."/>
            <person name="Watanabe T."/>
            <person name="Sugiyama A."/>
            <person name="Takemoto M."/>
            <person name="Kawakami B."/>
            <person name="Yamazaki M."/>
            <person name="Watanabe K."/>
            <person name="Kumagai A."/>
            <person name="Itakura S."/>
            <person name="Fukuzumi Y."/>
            <person name="Fujimori Y."/>
            <person name="Komiyama M."/>
            <person name="Tashiro H."/>
            <person name="Tanigami A."/>
            <person name="Fujiwara T."/>
            <person name="Ono T."/>
            <person name="Yamada K."/>
            <person name="Fujii Y."/>
            <person name="Ozaki K."/>
            <person name="Hirao M."/>
            <person name="Ohmori Y."/>
            <person name="Kawabata A."/>
            <person name="Hikiji T."/>
            <person name="Kobatake N."/>
            <person name="Inagaki H."/>
            <person name="Ikema Y."/>
            <person name="Okamoto S."/>
            <person name="Okitani R."/>
            <person name="Kawakami T."/>
            <person name="Noguchi S."/>
            <person name="Itoh T."/>
            <person name="Shigeta K."/>
            <person name="Senba T."/>
            <person name="Matsumura K."/>
            <person name="Nakajima Y."/>
            <person name="Mizuno T."/>
            <person name="Morinaga M."/>
            <person name="Sasaki M."/>
            <person name="Togashi T."/>
            <person name="Oyama M."/>
            <person name="Hata H."/>
            <person name="Watanabe M."/>
            <person name="Komatsu T."/>
            <person name="Mizushima-Sugano J."/>
            <person name="Satoh T."/>
            <person name="Shirai Y."/>
            <person name="Takahashi Y."/>
            <person name="Nakagawa K."/>
            <person name="Okumura K."/>
            <person name="Nagase T."/>
            <person name="Nomura N."/>
            <person name="Kikuchi H."/>
            <person name="Masuho Y."/>
            <person name="Yamashita R."/>
            <person name="Nakai K."/>
            <person name="Yada T."/>
            <person name="Nakamura Y."/>
            <person name="Ohara O."/>
            <person name="Isogai T."/>
            <person name="Sugano S."/>
        </authorList>
    </citation>
    <scope>NUCLEOTIDE SEQUENCE [LARGE SCALE MRNA]</scope>
    <source>
        <tissue>Mammary gland</tissue>
        <tissue>Thymus</tissue>
    </source>
</reference>
<reference key="2">
    <citation type="journal article" date="2004" name="Nature">
        <title>DNA sequence and analysis of human chromosome 9.</title>
        <authorList>
            <person name="Humphray S.J."/>
            <person name="Oliver K."/>
            <person name="Hunt A.R."/>
            <person name="Plumb R.W."/>
            <person name="Loveland J.E."/>
            <person name="Howe K.L."/>
            <person name="Andrews T.D."/>
            <person name="Searle S."/>
            <person name="Hunt S.E."/>
            <person name="Scott C.E."/>
            <person name="Jones M.C."/>
            <person name="Ainscough R."/>
            <person name="Almeida J.P."/>
            <person name="Ambrose K.D."/>
            <person name="Ashwell R.I.S."/>
            <person name="Babbage A.K."/>
            <person name="Babbage S."/>
            <person name="Bagguley C.L."/>
            <person name="Bailey J."/>
            <person name="Banerjee R."/>
            <person name="Barker D.J."/>
            <person name="Barlow K.F."/>
            <person name="Bates K."/>
            <person name="Beasley H."/>
            <person name="Beasley O."/>
            <person name="Bird C.P."/>
            <person name="Bray-Allen S."/>
            <person name="Brown A.J."/>
            <person name="Brown J.Y."/>
            <person name="Burford D."/>
            <person name="Burrill W."/>
            <person name="Burton J."/>
            <person name="Carder C."/>
            <person name="Carter N.P."/>
            <person name="Chapman J.C."/>
            <person name="Chen Y."/>
            <person name="Clarke G."/>
            <person name="Clark S.Y."/>
            <person name="Clee C.M."/>
            <person name="Clegg S."/>
            <person name="Collier R.E."/>
            <person name="Corby N."/>
            <person name="Crosier M."/>
            <person name="Cummings A.T."/>
            <person name="Davies J."/>
            <person name="Dhami P."/>
            <person name="Dunn M."/>
            <person name="Dutta I."/>
            <person name="Dyer L.W."/>
            <person name="Earthrowl M.E."/>
            <person name="Faulkner L."/>
            <person name="Fleming C.J."/>
            <person name="Frankish A."/>
            <person name="Frankland J.A."/>
            <person name="French L."/>
            <person name="Fricker D.G."/>
            <person name="Garner P."/>
            <person name="Garnett J."/>
            <person name="Ghori J."/>
            <person name="Gilbert J.G.R."/>
            <person name="Glison C."/>
            <person name="Grafham D.V."/>
            <person name="Gribble S."/>
            <person name="Griffiths C."/>
            <person name="Griffiths-Jones S."/>
            <person name="Grocock R."/>
            <person name="Guy J."/>
            <person name="Hall R.E."/>
            <person name="Hammond S."/>
            <person name="Harley J.L."/>
            <person name="Harrison E.S.I."/>
            <person name="Hart E.A."/>
            <person name="Heath P.D."/>
            <person name="Henderson C.D."/>
            <person name="Hopkins B.L."/>
            <person name="Howard P.J."/>
            <person name="Howden P.J."/>
            <person name="Huckle E."/>
            <person name="Johnson C."/>
            <person name="Johnson D."/>
            <person name="Joy A.A."/>
            <person name="Kay M."/>
            <person name="Keenan S."/>
            <person name="Kershaw J.K."/>
            <person name="Kimberley A.M."/>
            <person name="King A."/>
            <person name="Knights A."/>
            <person name="Laird G.K."/>
            <person name="Langford C."/>
            <person name="Lawlor S."/>
            <person name="Leongamornlert D.A."/>
            <person name="Leversha M."/>
            <person name="Lloyd C."/>
            <person name="Lloyd D.M."/>
            <person name="Lovell J."/>
            <person name="Martin S."/>
            <person name="Mashreghi-Mohammadi M."/>
            <person name="Matthews L."/>
            <person name="McLaren S."/>
            <person name="McLay K.E."/>
            <person name="McMurray A."/>
            <person name="Milne S."/>
            <person name="Nickerson T."/>
            <person name="Nisbett J."/>
            <person name="Nordsiek G."/>
            <person name="Pearce A.V."/>
            <person name="Peck A.I."/>
            <person name="Porter K.M."/>
            <person name="Pandian R."/>
            <person name="Pelan S."/>
            <person name="Phillimore B."/>
            <person name="Povey S."/>
            <person name="Ramsey Y."/>
            <person name="Rand V."/>
            <person name="Scharfe M."/>
            <person name="Sehra H.K."/>
            <person name="Shownkeen R."/>
            <person name="Sims S.K."/>
            <person name="Skuce C.D."/>
            <person name="Smith M."/>
            <person name="Steward C.A."/>
            <person name="Swarbreck D."/>
            <person name="Sycamore N."/>
            <person name="Tester J."/>
            <person name="Thorpe A."/>
            <person name="Tracey A."/>
            <person name="Tromans A."/>
            <person name="Thomas D.W."/>
            <person name="Wall M."/>
            <person name="Wallis J.M."/>
            <person name="West A.P."/>
            <person name="Whitehead S.L."/>
            <person name="Willey D.L."/>
            <person name="Williams S.A."/>
            <person name="Wilming L."/>
            <person name="Wray P.W."/>
            <person name="Young L."/>
            <person name="Ashurst J.L."/>
            <person name="Coulson A."/>
            <person name="Blocker H."/>
            <person name="Durbin R.M."/>
            <person name="Sulston J.E."/>
            <person name="Hubbard T."/>
            <person name="Jackson M.J."/>
            <person name="Bentley D.R."/>
            <person name="Beck S."/>
            <person name="Rogers J."/>
            <person name="Dunham I."/>
        </authorList>
    </citation>
    <scope>NUCLEOTIDE SEQUENCE [LARGE SCALE GENOMIC DNA]</scope>
</reference>
<reference key="3">
    <citation type="journal article" date="2004" name="Genome Res.">
        <title>The status, quality, and expansion of the NIH full-length cDNA project: the Mammalian Gene Collection (MGC).</title>
        <authorList>
            <consortium name="The MGC Project Team"/>
        </authorList>
    </citation>
    <scope>NUCLEOTIDE SEQUENCE [LARGE SCALE MRNA]</scope>
    <scope>VARIANT TRP-140</scope>
    <source>
        <tissue>Testis</tissue>
    </source>
</reference>
<reference key="4">
    <citation type="journal article" date="2006" name="J. Biol. Chem.">
        <title>Identification and functional characterization of a presqualene diphosphate phosphatase.</title>
        <authorList>
            <person name="Fukunaga K."/>
            <person name="Arita M."/>
            <person name="Takahashi M."/>
            <person name="Morris A.J."/>
            <person name="Pfeffer M."/>
            <person name="Levy B.D."/>
        </authorList>
    </citation>
    <scope>PROTEIN SEQUENCE OF 76-91</scope>
    <scope>FUNCTION</scope>
    <scope>CATALYTIC ACTIVITY</scope>
    <scope>BIOPHYSICOCHEMICAL PROPERTIES</scope>
    <scope>SUBCELLULAR LOCATION</scope>
    <scope>TOPOLOGY</scope>
    <scope>TISSUE SPECIFICITY</scope>
</reference>
<reference key="5">
    <citation type="journal article" date="2008" name="Biochim. Biophys. Acta">
        <title>Novel function of the human presqualene diphosphate phosphatase as a type II phosphatidate phosphatase in phosphatidylcholine and triacylglyceride biosynthesis pathways.</title>
        <authorList>
            <person name="Theofilopoulos S."/>
            <person name="Lykidis A."/>
            <person name="Leondaritis G."/>
            <person name="Mangoura D."/>
        </authorList>
    </citation>
    <scope>FUNCTION</scope>
    <scope>CATALYTIC ACTIVITY</scope>
    <scope>BIOPHYSICOCHEMICAL PROPERTIES</scope>
    <scope>ACTIVITY REGULATION</scope>
    <scope>SUBCELLULAR LOCATION</scope>
</reference>
<reference key="6">
    <citation type="journal article" date="2009" name="Biochemistry">
        <title>Activation of polyisoprenyl diphosphate phosphatase 1 remodels cellular presqualene diphosphate.</title>
        <authorList>
            <person name="Carlo T."/>
            <person name="Petasis N.A."/>
            <person name="Levy B.D."/>
        </authorList>
    </citation>
    <scope>FUNCTION</scope>
    <scope>CATALYTIC ACTIVITY</scope>
    <scope>PHOSPHORYLATION</scope>
</reference>
<reference key="7">
    <citation type="journal article" date="2010" name="J. Biol. Chem.">
        <title>Functional characterization of the atypical integral membrane lipid phosphatase PDP1/PPAPDC2 identifies a pathway for interconversion of isoprenols and isoprenoid phosphates in mammalian cells.</title>
        <authorList>
            <person name="Miriyala S."/>
            <person name="Subramanian T."/>
            <person name="Panchatcharam M."/>
            <person name="Ren H."/>
            <person name="McDermott M.I."/>
            <person name="Sunkara M."/>
            <person name="Drennan T."/>
            <person name="Smyth S.S."/>
            <person name="Spielmann H.P."/>
            <person name="Morris A.J."/>
        </authorList>
    </citation>
    <scope>FUNCTION</scope>
    <scope>CATALYTIC ACTIVITY</scope>
    <scope>SUBSTRATE SPECIFICITY</scope>
    <scope>SUBCELLULAR LOCATION</scope>
    <scope>TOPOLOGY</scope>
    <scope>ACTIVE SITE</scope>
    <scope>REGION</scope>
    <scope>MUTAGENESIS OF LYS-184; SER-212 AND HIS-256</scope>
</reference>
<reference key="8">
    <citation type="journal article" date="2011" name="BMC Syst. Biol.">
        <title>Initial characterization of the human central proteome.</title>
        <authorList>
            <person name="Burkard T.R."/>
            <person name="Planyavsky M."/>
            <person name="Kaupe I."/>
            <person name="Breitwieser F.P."/>
            <person name="Buerckstuemmer T."/>
            <person name="Bennett K.L."/>
            <person name="Superti-Furga G."/>
            <person name="Colinge J."/>
        </authorList>
    </citation>
    <scope>IDENTIFICATION BY MASS SPECTROMETRY [LARGE SCALE ANALYSIS]</scope>
</reference>
<reference key="9">
    <citation type="journal article" date="2013" name="FASEB J.">
        <title>15-Epi-lipoxin A4 inhibits human neutrophil superoxide anion generation by regulating polyisoprenyl diphosphate phosphatase 1.</title>
        <authorList>
            <person name="Carlo T."/>
            <person name="Kalwa H."/>
            <person name="Levy B.D."/>
        </authorList>
    </citation>
    <scope>FUNCTION</scope>
    <scope>PHOSPHORYLATION</scope>
</reference>
<reference key="10">
    <citation type="journal article" date="2014" name="J. Proteomics">
        <title>An enzyme assisted RP-RPLC approach for in-depth analysis of human liver phosphoproteome.</title>
        <authorList>
            <person name="Bian Y."/>
            <person name="Song C."/>
            <person name="Cheng K."/>
            <person name="Dong M."/>
            <person name="Wang F."/>
            <person name="Huang J."/>
            <person name="Sun D."/>
            <person name="Wang L."/>
            <person name="Ye M."/>
            <person name="Zou H."/>
        </authorList>
    </citation>
    <scope>PHOSPHORYLATION [LARGE SCALE ANALYSIS] AT SER-26 AND SER-36</scope>
    <scope>IDENTIFICATION BY MASS SPECTROMETRY [LARGE SCALE ANALYSIS]</scope>
    <source>
        <tissue>Liver</tissue>
    </source>
</reference>